<proteinExistence type="evidence at protein level"/>
<feature type="signal peptide" evidence="2">
    <location>
        <begin position="1"/>
        <end position="21"/>
    </location>
</feature>
<feature type="propeptide" id="PRO_0000400895" evidence="3">
    <location>
        <begin position="22"/>
        <end position="74"/>
    </location>
</feature>
<feature type="peptide" id="PRO_0000400896" description="U11-theraphotoxin-Hhn1a">
    <location>
        <begin position="75"/>
        <end position="113"/>
    </location>
</feature>
<feature type="disulfide bond" evidence="1">
    <location>
        <begin position="75"/>
        <end position="90"/>
    </location>
</feature>
<feature type="disulfide bond" evidence="1">
    <location>
        <begin position="82"/>
        <end position="95"/>
    </location>
</feature>
<feature type="disulfide bond" evidence="1">
    <location>
        <begin position="89"/>
        <end position="110"/>
    </location>
</feature>
<comment type="function">
    <text evidence="1">Probable ion channel inhibitor.</text>
</comment>
<comment type="subcellular location">
    <subcellularLocation>
        <location>Secreted</location>
    </subcellularLocation>
</comment>
<comment type="tissue specificity">
    <text>Expressed by the venom gland.</text>
</comment>
<comment type="domain">
    <text evidence="1">The presence of a 'disulfide through disulfide knot' structurally defines this protein as a knottin.</text>
</comment>
<comment type="similarity">
    <text evidence="4">Belongs to the neurotoxin 14 (magi-1) family. 01 (HNTX-16) subfamily.</text>
</comment>
<keyword id="KW-0903">Direct protein sequencing</keyword>
<keyword id="KW-1015">Disulfide bond</keyword>
<keyword id="KW-0872">Ion channel impairing toxin</keyword>
<keyword id="KW-0960">Knottin</keyword>
<keyword id="KW-0964">Secreted</keyword>
<keyword id="KW-0732">Signal</keyword>
<keyword id="KW-0800">Toxin</keyword>
<reference key="1">
    <citation type="journal article" date="2010" name="J. Proteome Res.">
        <title>Molecular diversification of peptide toxins from the tarantula Haplopelma hainanum (Ornithoctonus hainana) venom based on transcriptomic, peptidomic, and genomic analyses.</title>
        <authorList>
            <person name="Tang X."/>
            <person name="Zhang Y."/>
            <person name="Hu W."/>
            <person name="Xu D."/>
            <person name="Tao H."/>
            <person name="Yang X."/>
            <person name="Li Y."/>
            <person name="Jiang L."/>
            <person name="Liang S."/>
        </authorList>
    </citation>
    <scope>NUCLEOTIDE SEQUENCE [LARGE SCALE MRNA]</scope>
    <scope>PROTEIN SEQUENCE OF 75-113</scope>
    <scope>IDENTIFICATION BY MASS SPECTROMETRY</scope>
    <source>
        <tissue>Venom</tissue>
        <tissue>Venom gland</tissue>
    </source>
</reference>
<accession>D2Y293</accession>
<dbReference type="EMBL" id="GU292970">
    <property type="protein sequence ID" value="ADB56786.1"/>
    <property type="molecule type" value="mRNA"/>
</dbReference>
<dbReference type="ArachnoServer" id="AS001592">
    <property type="toxin name" value="U11-theraphotoxin-Hhn1a"/>
</dbReference>
<dbReference type="GO" id="GO:0005576">
    <property type="term" value="C:extracellular region"/>
    <property type="evidence" value="ECO:0007669"/>
    <property type="project" value="UniProtKB-SubCell"/>
</dbReference>
<dbReference type="GO" id="GO:0019871">
    <property type="term" value="F:sodium channel inhibitor activity"/>
    <property type="evidence" value="ECO:0007669"/>
    <property type="project" value="InterPro"/>
</dbReference>
<dbReference type="GO" id="GO:0090729">
    <property type="term" value="F:toxin activity"/>
    <property type="evidence" value="ECO:0007669"/>
    <property type="project" value="UniProtKB-KW"/>
</dbReference>
<dbReference type="InterPro" id="IPR012627">
    <property type="entry name" value="Toxin_22"/>
</dbReference>
<dbReference type="Pfam" id="PF08092">
    <property type="entry name" value="Toxin_22"/>
    <property type="match status" value="1"/>
</dbReference>
<protein>
    <recommendedName>
        <fullName>U11-theraphotoxin-Hhn1a</fullName>
        <shortName>U11-TRTX-Hhn1a</shortName>
    </recommendedName>
    <alternativeName>
        <fullName>Hainantoxin-XVI.20</fullName>
        <shortName>HNTX-XVI.20</shortName>
    </alternativeName>
    <alternativeName>
        <fullName>Peptide F4-19.87</fullName>
    </alternativeName>
</protein>
<organism>
    <name type="scientific">Cyriopagopus hainanus</name>
    <name type="common">Chinese bird spider</name>
    <name type="synonym">Haplopelma hainanum</name>
    <dbReference type="NCBI Taxonomy" id="209901"/>
    <lineage>
        <taxon>Eukaryota</taxon>
        <taxon>Metazoa</taxon>
        <taxon>Ecdysozoa</taxon>
        <taxon>Arthropoda</taxon>
        <taxon>Chelicerata</taxon>
        <taxon>Arachnida</taxon>
        <taxon>Araneae</taxon>
        <taxon>Mygalomorphae</taxon>
        <taxon>Theraphosidae</taxon>
        <taxon>Haplopelma</taxon>
    </lineage>
</organism>
<sequence length="113" mass="13119">MNTVRVTFLLVFVLAVSLGQTDKDENRMEMQEKTEQGKSYLDFAENLLLQKLEELEAKLLEEDSEESRNSRQKRCIGEGVPCDENDPRCCSGLVCLKPTLHGIWYKSYYCYKK</sequence>
<name>H1620_CYRHA</name>
<evidence type="ECO:0000250" key="1"/>
<evidence type="ECO:0000255" key="2"/>
<evidence type="ECO:0000269" key="3">
    <source>
    </source>
</evidence>
<evidence type="ECO:0000305" key="4"/>